<sequence length="545" mass="58917">MAHACARGVVAPAPSRVSPRVSGRRVVVARVGTSSAEASAKEAPKKSEAKGANEVQFEAVIGIETHVQINSNTKAFCRCAAVYGAEPNRHTCPVCLGHPGTYPILNAAVVKKAIALGIGLDCSVIRRKSTFDRKQYFYPDLPKGYQISQFDEPYGEHGKLDVVIPVEDGGGVRTIGITRAHIEEDAGKLTHFPAKGNEPGYALADYNRAGVALVEIVSEPDLRTGREVAAYGAELRRLVRYLDVSDGNLSEGSMRCDVNVSVRPVGREAFGTKVEVKNMNSFNAMSRAVDFEIERQTTLIRDGRGDEIVQETRTWDEGRQRTVSMRKKEGLADYRYFPEPDLPPLVFDNAYVDGVKAEMPELPAAIRARYAALGLPDDAVQVLVEDKALVEYFDATIAAGAPAKQAANWLTGDIMAYLKNAKDVTISTMPLRSKDLAEFCSMIENGEISGKIGKDILPDLLVGETGGAGPRAIVEERGLSQISDPAEIEAIVDKVLEENPGQLEQYRGGKDKLKGFFVGKVLAASGGRANPALSNQILMKKLAGE</sequence>
<name>GATB1_MICPC</name>
<dbReference type="EC" id="6.3.5.-" evidence="1"/>
<dbReference type="EMBL" id="GG663735">
    <property type="protein sequence ID" value="EEH60907.1"/>
    <property type="molecule type" value="Genomic_DNA"/>
</dbReference>
<dbReference type="RefSeq" id="XP_003055655.1">
    <property type="nucleotide sequence ID" value="XM_003055609.1"/>
</dbReference>
<dbReference type="SMR" id="C1MIE8"/>
<dbReference type="STRING" id="564608.C1MIE8"/>
<dbReference type="GeneID" id="9680990"/>
<dbReference type="KEGG" id="mpp:MICPUCDRAFT_50541"/>
<dbReference type="eggNOG" id="KOG2438">
    <property type="taxonomic scope" value="Eukaryota"/>
</dbReference>
<dbReference type="OMA" id="ARKWWMG"/>
<dbReference type="OrthoDB" id="1722066at2759"/>
<dbReference type="Proteomes" id="UP000001876">
    <property type="component" value="Unassembled WGS sequence"/>
</dbReference>
<dbReference type="GO" id="GO:0009507">
    <property type="term" value="C:chloroplast"/>
    <property type="evidence" value="ECO:0007669"/>
    <property type="project" value="UniProtKB-SubCell"/>
</dbReference>
<dbReference type="GO" id="GO:0030956">
    <property type="term" value="C:glutamyl-tRNA(Gln) amidotransferase complex"/>
    <property type="evidence" value="ECO:0007669"/>
    <property type="project" value="UniProtKB-UniRule"/>
</dbReference>
<dbReference type="GO" id="GO:0005739">
    <property type="term" value="C:mitochondrion"/>
    <property type="evidence" value="ECO:0007669"/>
    <property type="project" value="UniProtKB-SubCell"/>
</dbReference>
<dbReference type="GO" id="GO:0005524">
    <property type="term" value="F:ATP binding"/>
    <property type="evidence" value="ECO:0007669"/>
    <property type="project" value="UniProtKB-KW"/>
</dbReference>
<dbReference type="GO" id="GO:0050567">
    <property type="term" value="F:glutaminyl-tRNA synthase (glutamine-hydrolyzing) activity"/>
    <property type="evidence" value="ECO:0007669"/>
    <property type="project" value="UniProtKB-UniRule"/>
</dbReference>
<dbReference type="GO" id="GO:0070681">
    <property type="term" value="P:glutaminyl-tRNAGln biosynthesis via transamidation"/>
    <property type="evidence" value="ECO:0007669"/>
    <property type="project" value="UniProtKB-UniRule"/>
</dbReference>
<dbReference type="GO" id="GO:0032543">
    <property type="term" value="P:mitochondrial translation"/>
    <property type="evidence" value="ECO:0007669"/>
    <property type="project" value="UniProtKB-UniRule"/>
</dbReference>
<dbReference type="FunFam" id="1.10.10.410:FF:000001">
    <property type="entry name" value="Aspartyl/glutamyl-tRNA(Asn/Gln) amidotransferase subunit B"/>
    <property type="match status" value="1"/>
</dbReference>
<dbReference type="Gene3D" id="1.10.10.410">
    <property type="match status" value="1"/>
</dbReference>
<dbReference type="HAMAP" id="MF_00121">
    <property type="entry name" value="GatB"/>
    <property type="match status" value="1"/>
</dbReference>
<dbReference type="InterPro" id="IPR017959">
    <property type="entry name" value="Asn/Gln-tRNA_amidoTrfase_suB/E"/>
</dbReference>
<dbReference type="InterPro" id="IPR006075">
    <property type="entry name" value="Asn/Gln-tRNA_Trfase_suB/E_cat"/>
</dbReference>
<dbReference type="InterPro" id="IPR018027">
    <property type="entry name" value="Asn/Gln_amidotransferase"/>
</dbReference>
<dbReference type="InterPro" id="IPR003789">
    <property type="entry name" value="Asn/Gln_tRNA_amidoTrase-B-like"/>
</dbReference>
<dbReference type="InterPro" id="IPR004413">
    <property type="entry name" value="GatB"/>
</dbReference>
<dbReference type="InterPro" id="IPR023168">
    <property type="entry name" value="GatB_Yqey_C_2"/>
</dbReference>
<dbReference type="InterPro" id="IPR017958">
    <property type="entry name" value="Gln-tRNA_amidoTrfase_suB_CS"/>
</dbReference>
<dbReference type="InterPro" id="IPR014746">
    <property type="entry name" value="Gln_synth/guanido_kin_cat_dom"/>
</dbReference>
<dbReference type="NCBIfam" id="TIGR00133">
    <property type="entry name" value="gatB"/>
    <property type="match status" value="1"/>
</dbReference>
<dbReference type="NCBIfam" id="NF004012">
    <property type="entry name" value="PRK05477.1-2"/>
    <property type="match status" value="1"/>
</dbReference>
<dbReference type="NCBIfam" id="NF004014">
    <property type="entry name" value="PRK05477.1-4"/>
    <property type="match status" value="1"/>
</dbReference>
<dbReference type="PANTHER" id="PTHR11659">
    <property type="entry name" value="GLUTAMYL-TRNA GLN AMIDOTRANSFERASE SUBUNIT B MITOCHONDRIAL AND PROKARYOTIC PET112-RELATED"/>
    <property type="match status" value="1"/>
</dbReference>
<dbReference type="PANTHER" id="PTHR11659:SF0">
    <property type="entry name" value="GLUTAMYL-TRNA(GLN) AMIDOTRANSFERASE SUBUNIT B, MITOCHONDRIAL"/>
    <property type="match status" value="1"/>
</dbReference>
<dbReference type="Pfam" id="PF02934">
    <property type="entry name" value="GatB_N"/>
    <property type="match status" value="1"/>
</dbReference>
<dbReference type="Pfam" id="PF02637">
    <property type="entry name" value="GatB_Yqey"/>
    <property type="match status" value="1"/>
</dbReference>
<dbReference type="SMART" id="SM00845">
    <property type="entry name" value="GatB_Yqey"/>
    <property type="match status" value="1"/>
</dbReference>
<dbReference type="SUPFAM" id="SSF89095">
    <property type="entry name" value="GatB/YqeY motif"/>
    <property type="match status" value="1"/>
</dbReference>
<dbReference type="SUPFAM" id="SSF55931">
    <property type="entry name" value="Glutamine synthetase/guanido kinase"/>
    <property type="match status" value="1"/>
</dbReference>
<dbReference type="PROSITE" id="PS01234">
    <property type="entry name" value="GATB"/>
    <property type="match status" value="1"/>
</dbReference>
<protein>
    <recommendedName>
        <fullName>Glutamyl-tRNA(Gln) amidotransferase subunit B-1, chloroplastic/mitochondrial</fullName>
        <shortName evidence="1">Glu-AdT subunit B-1</shortName>
        <ecNumber evidence="1">6.3.5.-</ecNumber>
    </recommendedName>
</protein>
<gene>
    <name evidence="1" type="primary">GATB-1</name>
    <name type="ORF">MICPUCDRAFT_50541</name>
</gene>
<evidence type="ECO:0000255" key="1">
    <source>
        <dbReference type="HAMAP-Rule" id="MF_03147"/>
    </source>
</evidence>
<feature type="chain" id="PRO_0000413225" description="Glutamyl-tRNA(Gln) amidotransferase subunit B-1, chloroplastic/mitochondrial">
    <location>
        <begin position="1"/>
        <end position="545"/>
    </location>
</feature>
<proteinExistence type="inferred from homology"/>
<reference key="1">
    <citation type="journal article" date="2009" name="Science">
        <title>Green evolution and dynamic adaptations revealed by genomes of the marine picoeukaryotes Micromonas.</title>
        <authorList>
            <person name="Worden A.Z."/>
            <person name="Lee J.H."/>
            <person name="Mock T."/>
            <person name="Rouze P."/>
            <person name="Simmons M.P."/>
            <person name="Aerts A.L."/>
            <person name="Allen A.E."/>
            <person name="Cuvelier M.L."/>
            <person name="Derelle E."/>
            <person name="Everett M.V."/>
            <person name="Foulon E."/>
            <person name="Grimwood J."/>
            <person name="Gundlach H."/>
            <person name="Henrissat B."/>
            <person name="Napoli C."/>
            <person name="McDonald S.M."/>
            <person name="Parker M.S."/>
            <person name="Rombauts S."/>
            <person name="Salamov A."/>
            <person name="Von Dassow P."/>
            <person name="Badger J.H."/>
            <person name="Coutinho P.M."/>
            <person name="Demir E."/>
            <person name="Dubchak I."/>
            <person name="Gentemann C."/>
            <person name="Eikrem W."/>
            <person name="Gready J.E."/>
            <person name="John U."/>
            <person name="Lanier W."/>
            <person name="Lindquist E.A."/>
            <person name="Lucas S."/>
            <person name="Mayer K.F."/>
            <person name="Moreau H."/>
            <person name="Not F."/>
            <person name="Otillar R."/>
            <person name="Panaud O."/>
            <person name="Pangilinan J."/>
            <person name="Paulsen I."/>
            <person name="Piegu B."/>
            <person name="Poliakov A."/>
            <person name="Robbens S."/>
            <person name="Schmutz J."/>
            <person name="Toulza E."/>
            <person name="Wyss T."/>
            <person name="Zelensky A."/>
            <person name="Zhou K."/>
            <person name="Armbrust E.V."/>
            <person name="Bhattacharya D."/>
            <person name="Goodenough U.W."/>
            <person name="Van de Peer Y."/>
            <person name="Grigoriev I.V."/>
        </authorList>
    </citation>
    <scope>NUCLEOTIDE SEQUENCE [LARGE SCALE GENOMIC DNA]</scope>
    <source>
        <strain>CCMP1545</strain>
    </source>
</reference>
<accession>C1MIE8</accession>
<comment type="function">
    <text evidence="1">Allows the formation of correctly charged Gln-tRNA(Gln) through the transamidation of misacylated Glu-tRNA(Gln) in chloroplasts and mitochondria. The reaction takes place in the presence of glutamine and ATP through an activated gamma-phospho-Glu-tRNA(Gln).</text>
</comment>
<comment type="catalytic activity">
    <reaction evidence="1">
        <text>L-glutamyl-tRNA(Gln) + L-glutamine + ATP + H2O = L-glutaminyl-tRNA(Gln) + L-glutamate + ADP + phosphate + H(+)</text>
        <dbReference type="Rhea" id="RHEA:17521"/>
        <dbReference type="Rhea" id="RHEA-COMP:9681"/>
        <dbReference type="Rhea" id="RHEA-COMP:9684"/>
        <dbReference type="ChEBI" id="CHEBI:15377"/>
        <dbReference type="ChEBI" id="CHEBI:15378"/>
        <dbReference type="ChEBI" id="CHEBI:29985"/>
        <dbReference type="ChEBI" id="CHEBI:30616"/>
        <dbReference type="ChEBI" id="CHEBI:43474"/>
        <dbReference type="ChEBI" id="CHEBI:58359"/>
        <dbReference type="ChEBI" id="CHEBI:78520"/>
        <dbReference type="ChEBI" id="CHEBI:78521"/>
        <dbReference type="ChEBI" id="CHEBI:456216"/>
    </reaction>
</comment>
<comment type="subunit">
    <text evidence="1">Subunit of the heterotrimeric GatCAB amidotransferase (AdT) complex, composed of A, B and C subunits.</text>
</comment>
<comment type="subcellular location">
    <subcellularLocation>
        <location evidence="1">Mitochondrion</location>
    </subcellularLocation>
    <subcellularLocation>
        <location evidence="1">Plastid</location>
        <location evidence="1">Chloroplast</location>
    </subcellularLocation>
</comment>
<comment type="miscellaneous">
    <text evidence="1">This protein may be expected to contain an N-terminal transit peptide but none has been predicted.</text>
</comment>
<comment type="similarity">
    <text evidence="1">Belongs to the GatB/GatE family. GatB subfamily.</text>
</comment>
<keyword id="KW-0067">ATP-binding</keyword>
<keyword id="KW-0150">Chloroplast</keyword>
<keyword id="KW-0436">Ligase</keyword>
<keyword id="KW-0496">Mitochondrion</keyword>
<keyword id="KW-0547">Nucleotide-binding</keyword>
<keyword id="KW-0934">Plastid</keyword>
<keyword id="KW-0648">Protein biosynthesis</keyword>
<keyword id="KW-1185">Reference proteome</keyword>
<organism>
    <name type="scientific">Micromonas pusilla (strain CCMP1545)</name>
    <name type="common">Picoplanktonic green alga</name>
    <dbReference type="NCBI Taxonomy" id="564608"/>
    <lineage>
        <taxon>Eukaryota</taxon>
        <taxon>Viridiplantae</taxon>
        <taxon>Chlorophyta</taxon>
        <taxon>Mamiellophyceae</taxon>
        <taxon>Mamiellales</taxon>
        <taxon>Mamiellaceae</taxon>
        <taxon>Micromonas</taxon>
    </lineage>
</organism>